<feature type="peptide" id="PRO_0000378685" description="Pyrokinin-5" evidence="3">
    <location>
        <begin position="1"/>
        <end position="17"/>
    </location>
</feature>
<feature type="modified residue" description="Leucine amide" evidence="3">
    <location>
        <position position="17"/>
    </location>
</feature>
<proteinExistence type="evidence at protein level"/>
<keyword id="KW-0027">Amidation</keyword>
<keyword id="KW-0903">Direct protein sequencing</keyword>
<keyword id="KW-0527">Neuropeptide</keyword>
<keyword id="KW-0964">Secreted</keyword>
<accession>P85579</accession>
<reference evidence="5" key="1">
    <citation type="journal article" date="2009" name="BMC Evol. Biol.">
        <title>A proteomic approach for studying insect phylogeny: CAPA peptides of ancient insect taxa (Dictyoptera, Blattoptera) as a test case.</title>
        <authorList>
            <person name="Roth S."/>
            <person name="Fromm B."/>
            <person name="Gaede G."/>
            <person name="Predel R."/>
        </authorList>
    </citation>
    <scope>PROTEIN SEQUENCE</scope>
    <scope>AMIDATION AT LEU-17</scope>
    <source>
        <tissue evidence="3">Abdominal perisympathetic organs</tissue>
    </source>
</reference>
<sequence length="17" mass="1782">SGETSGEGNGMWFGPRL</sequence>
<organism>
    <name type="scientific">Cyrtotria poduriformis</name>
    <name type="common">Cockroach</name>
    <dbReference type="NCBI Taxonomy" id="344688"/>
    <lineage>
        <taxon>Eukaryota</taxon>
        <taxon>Metazoa</taxon>
        <taxon>Ecdysozoa</taxon>
        <taxon>Arthropoda</taxon>
        <taxon>Hexapoda</taxon>
        <taxon>Insecta</taxon>
        <taxon>Pterygota</taxon>
        <taxon>Neoptera</taxon>
        <taxon>Polyneoptera</taxon>
        <taxon>Dictyoptera</taxon>
        <taxon>Blattodea</taxon>
        <taxon>Blaberoidea</taxon>
        <taxon>Blaberidae</taxon>
        <taxon>Perisphaerinae</taxon>
        <taxon>Cyrtotria</taxon>
    </lineage>
</organism>
<dbReference type="GO" id="GO:0005576">
    <property type="term" value="C:extracellular region"/>
    <property type="evidence" value="ECO:0007669"/>
    <property type="project" value="UniProtKB-SubCell"/>
</dbReference>
<dbReference type="GO" id="GO:0005184">
    <property type="term" value="F:neuropeptide hormone activity"/>
    <property type="evidence" value="ECO:0007669"/>
    <property type="project" value="InterPro"/>
</dbReference>
<dbReference type="GO" id="GO:0007218">
    <property type="term" value="P:neuropeptide signaling pathway"/>
    <property type="evidence" value="ECO:0007669"/>
    <property type="project" value="UniProtKB-KW"/>
</dbReference>
<dbReference type="InterPro" id="IPR001484">
    <property type="entry name" value="Pyrokinin_CS"/>
</dbReference>
<dbReference type="PROSITE" id="PS00539">
    <property type="entry name" value="PYROKININ"/>
    <property type="match status" value="1"/>
</dbReference>
<comment type="function">
    <text evidence="1">Myoactive.</text>
</comment>
<comment type="subcellular location">
    <subcellularLocation>
        <location evidence="5">Secreted</location>
    </subcellularLocation>
</comment>
<comment type="similarity">
    <text evidence="2">Belongs to the pyrokinin family.</text>
</comment>
<evidence type="ECO:0000250" key="1">
    <source>
        <dbReference type="UniProtKB" id="P82617"/>
    </source>
</evidence>
<evidence type="ECO:0000255" key="2"/>
<evidence type="ECO:0000269" key="3">
    <source>
    </source>
</evidence>
<evidence type="ECO:0000303" key="4">
    <source>
    </source>
</evidence>
<evidence type="ECO:0000305" key="5"/>
<name>PPK5_CYRPO</name>
<protein>
    <recommendedName>
        <fullName evidence="1">Pyrokinin-5</fullName>
    </recommendedName>
    <alternativeName>
        <fullName evidence="4">CyrPo-Capa-PK</fullName>
    </alternativeName>
    <alternativeName>
        <fullName evidence="1">FXPRL-amide</fullName>
    </alternativeName>
</protein>